<protein>
    <recommendedName>
        <fullName evidence="1">Dihydroorotate dehydrogenase (quinone)</fullName>
        <ecNumber evidence="1">1.3.5.2</ecNumber>
    </recommendedName>
    <alternativeName>
        <fullName evidence="1">DHOdehase</fullName>
        <shortName evidence="1">DHOD</shortName>
        <shortName evidence="1">DHODase</shortName>
    </alternativeName>
    <alternativeName>
        <fullName evidence="1">Dihydroorotate oxidase</fullName>
    </alternativeName>
</protein>
<comment type="function">
    <text evidence="1">Catalyzes the conversion of dihydroorotate to orotate with quinone as electron acceptor.</text>
</comment>
<comment type="catalytic activity">
    <reaction evidence="1">
        <text>(S)-dihydroorotate + a quinone = orotate + a quinol</text>
        <dbReference type="Rhea" id="RHEA:30187"/>
        <dbReference type="ChEBI" id="CHEBI:24646"/>
        <dbReference type="ChEBI" id="CHEBI:30839"/>
        <dbReference type="ChEBI" id="CHEBI:30864"/>
        <dbReference type="ChEBI" id="CHEBI:132124"/>
        <dbReference type="EC" id="1.3.5.2"/>
    </reaction>
</comment>
<comment type="cofactor">
    <cofactor evidence="1">
        <name>FMN</name>
        <dbReference type="ChEBI" id="CHEBI:58210"/>
    </cofactor>
    <text evidence="1">Binds 1 FMN per subunit.</text>
</comment>
<comment type="pathway">
    <text evidence="1">Pyrimidine metabolism; UMP biosynthesis via de novo pathway; orotate from (S)-dihydroorotate (quinone route): step 1/1.</text>
</comment>
<comment type="subunit">
    <text evidence="1">Monomer.</text>
</comment>
<comment type="subcellular location">
    <subcellularLocation>
        <location evidence="1">Cell membrane</location>
        <topology evidence="1">Peripheral membrane protein</topology>
    </subcellularLocation>
</comment>
<comment type="similarity">
    <text evidence="1">Belongs to the dihydroorotate dehydrogenase family. Type 2 subfamily.</text>
</comment>
<comment type="sequence caution" evidence="2">
    <conflict type="erroneous initiation">
        <sequence resource="EMBL-CDS" id="AAU27900"/>
    </conflict>
</comment>
<proteinExistence type="inferred from homology"/>
<name>PYRD_LEGPH</name>
<reference key="1">
    <citation type="journal article" date="2004" name="Science">
        <title>The genomic sequence of the accidental pathogen Legionella pneumophila.</title>
        <authorList>
            <person name="Chien M."/>
            <person name="Morozova I."/>
            <person name="Shi S."/>
            <person name="Sheng H."/>
            <person name="Chen J."/>
            <person name="Gomez S.M."/>
            <person name="Asamani G."/>
            <person name="Hill K."/>
            <person name="Nuara J."/>
            <person name="Feder M."/>
            <person name="Rineer J."/>
            <person name="Greenberg J.J."/>
            <person name="Steshenko V."/>
            <person name="Park S.H."/>
            <person name="Zhao B."/>
            <person name="Teplitskaya E."/>
            <person name="Edwards J.R."/>
            <person name="Pampou S."/>
            <person name="Georghiou A."/>
            <person name="Chou I.-C."/>
            <person name="Iannuccilli W."/>
            <person name="Ulz M.E."/>
            <person name="Kim D.H."/>
            <person name="Geringer-Sameth A."/>
            <person name="Goldsberry C."/>
            <person name="Morozov P."/>
            <person name="Fischer S.G."/>
            <person name="Segal G."/>
            <person name="Qu X."/>
            <person name="Rzhetsky A."/>
            <person name="Zhang P."/>
            <person name="Cayanis E."/>
            <person name="De Jong P.J."/>
            <person name="Ju J."/>
            <person name="Kalachikov S."/>
            <person name="Shuman H.A."/>
            <person name="Russo J.J."/>
        </authorList>
    </citation>
    <scope>NUCLEOTIDE SEQUENCE [LARGE SCALE GENOMIC DNA]</scope>
    <source>
        <strain>Philadelphia 1 / ATCC 33152 / DSM 7513</strain>
    </source>
</reference>
<organism>
    <name type="scientific">Legionella pneumophila subsp. pneumophila (strain Philadelphia 1 / ATCC 33152 / DSM 7513)</name>
    <dbReference type="NCBI Taxonomy" id="272624"/>
    <lineage>
        <taxon>Bacteria</taxon>
        <taxon>Pseudomonadati</taxon>
        <taxon>Pseudomonadota</taxon>
        <taxon>Gammaproteobacteria</taxon>
        <taxon>Legionellales</taxon>
        <taxon>Legionellaceae</taxon>
        <taxon>Legionella</taxon>
    </lineage>
</organism>
<evidence type="ECO:0000255" key="1">
    <source>
        <dbReference type="HAMAP-Rule" id="MF_00225"/>
    </source>
</evidence>
<evidence type="ECO:0000305" key="2"/>
<keyword id="KW-1003">Cell membrane</keyword>
<keyword id="KW-0285">Flavoprotein</keyword>
<keyword id="KW-0288">FMN</keyword>
<keyword id="KW-0472">Membrane</keyword>
<keyword id="KW-0560">Oxidoreductase</keyword>
<keyword id="KW-0665">Pyrimidine biosynthesis</keyword>
<keyword id="KW-1185">Reference proteome</keyword>
<feature type="chain" id="PRO_0000148449" description="Dihydroorotate dehydrogenase (quinone)">
    <location>
        <begin position="1"/>
        <end position="333"/>
    </location>
</feature>
<feature type="active site" description="Nucleophile" evidence="1">
    <location>
        <position position="169"/>
    </location>
</feature>
<feature type="binding site" evidence="1">
    <location>
        <begin position="56"/>
        <end position="60"/>
    </location>
    <ligand>
        <name>FMN</name>
        <dbReference type="ChEBI" id="CHEBI:58210"/>
    </ligand>
</feature>
<feature type="binding site" evidence="1">
    <location>
        <position position="60"/>
    </location>
    <ligand>
        <name>substrate</name>
    </ligand>
</feature>
<feature type="binding site" evidence="1">
    <location>
        <position position="80"/>
    </location>
    <ligand>
        <name>FMN</name>
        <dbReference type="ChEBI" id="CHEBI:58210"/>
    </ligand>
</feature>
<feature type="binding site" evidence="1">
    <location>
        <begin position="105"/>
        <end position="109"/>
    </location>
    <ligand>
        <name>substrate</name>
    </ligand>
</feature>
<feature type="binding site" evidence="1">
    <location>
        <position position="133"/>
    </location>
    <ligand>
        <name>FMN</name>
        <dbReference type="ChEBI" id="CHEBI:58210"/>
    </ligand>
</feature>
<feature type="binding site" evidence="1">
    <location>
        <position position="166"/>
    </location>
    <ligand>
        <name>FMN</name>
        <dbReference type="ChEBI" id="CHEBI:58210"/>
    </ligand>
</feature>
<feature type="binding site" evidence="1">
    <location>
        <position position="166"/>
    </location>
    <ligand>
        <name>substrate</name>
    </ligand>
</feature>
<feature type="binding site" evidence="1">
    <location>
        <position position="171"/>
    </location>
    <ligand>
        <name>substrate</name>
    </ligand>
</feature>
<feature type="binding site" evidence="1">
    <location>
        <position position="211"/>
    </location>
    <ligand>
        <name>FMN</name>
        <dbReference type="ChEBI" id="CHEBI:58210"/>
    </ligand>
</feature>
<feature type="binding site" evidence="1">
    <location>
        <position position="239"/>
    </location>
    <ligand>
        <name>FMN</name>
        <dbReference type="ChEBI" id="CHEBI:58210"/>
    </ligand>
</feature>
<feature type="binding site" evidence="1">
    <location>
        <begin position="240"/>
        <end position="241"/>
    </location>
    <ligand>
        <name>substrate</name>
    </ligand>
</feature>
<feature type="binding site" evidence="1">
    <location>
        <position position="262"/>
    </location>
    <ligand>
        <name>FMN</name>
        <dbReference type="ChEBI" id="CHEBI:58210"/>
    </ligand>
</feature>
<feature type="binding site" evidence="1">
    <location>
        <position position="291"/>
    </location>
    <ligand>
        <name>FMN</name>
        <dbReference type="ChEBI" id="CHEBI:58210"/>
    </ligand>
</feature>
<feature type="binding site" evidence="1">
    <location>
        <begin position="312"/>
        <end position="313"/>
    </location>
    <ligand>
        <name>FMN</name>
        <dbReference type="ChEBI" id="CHEBI:58210"/>
    </ligand>
</feature>
<gene>
    <name evidence="1" type="primary">pyrD</name>
    <name type="ordered locus">lpg1821</name>
</gene>
<sequence>MYSLLRPLLFRLDAEKAHSLTLSLLHYLPGFYFRKIAGQPVHAMGLVFPHQVGLAAGLDKNGEHLDALAKLGFSFIELGTVTPKGQAGNPKPRLFRIAEANAIINRMGFNNSGVDVLVENVKRANYKGILGINIGKNKETNLNQAAEDYLYCFRKVYDHASYVTINISSPNTPDLRQLQQGDYFAELLTQLQKEQIKLADQYGRHVPLVVKVSPDETDETLKQMTDIILQYGIEGIIATNTTCSREMVKNLPCSEEQGGLSGRPLMELSTRCLRLLKQYVGNDVTLIGVGGIDSLESAKDKINAGASLLQVYSGLVYKGPELIHDIVSGLNAI</sequence>
<accession>Q5ZUH7</accession>
<dbReference type="EC" id="1.3.5.2" evidence="1"/>
<dbReference type="EMBL" id="AE017354">
    <property type="protein sequence ID" value="AAU27900.1"/>
    <property type="status" value="ALT_INIT"/>
    <property type="molecule type" value="Genomic_DNA"/>
</dbReference>
<dbReference type="RefSeq" id="WP_011214079.1">
    <property type="nucleotide sequence ID" value="NC_002942.5"/>
</dbReference>
<dbReference type="RefSeq" id="YP_095847.1">
    <property type="nucleotide sequence ID" value="NC_002942.5"/>
</dbReference>
<dbReference type="SMR" id="Q5ZUH7"/>
<dbReference type="STRING" id="272624.lpg1821"/>
<dbReference type="PaxDb" id="272624-lpg1821"/>
<dbReference type="KEGG" id="lpn:lpg1821"/>
<dbReference type="PATRIC" id="fig|272624.6.peg.1909"/>
<dbReference type="eggNOG" id="COG0167">
    <property type="taxonomic scope" value="Bacteria"/>
</dbReference>
<dbReference type="HOGENOM" id="CLU_013640_2_0_6"/>
<dbReference type="OrthoDB" id="9802377at2"/>
<dbReference type="UniPathway" id="UPA00070">
    <property type="reaction ID" value="UER00946"/>
</dbReference>
<dbReference type="Proteomes" id="UP000000609">
    <property type="component" value="Chromosome"/>
</dbReference>
<dbReference type="GO" id="GO:0005737">
    <property type="term" value="C:cytoplasm"/>
    <property type="evidence" value="ECO:0007669"/>
    <property type="project" value="InterPro"/>
</dbReference>
<dbReference type="GO" id="GO:0005886">
    <property type="term" value="C:plasma membrane"/>
    <property type="evidence" value="ECO:0007669"/>
    <property type="project" value="UniProtKB-SubCell"/>
</dbReference>
<dbReference type="GO" id="GO:0106430">
    <property type="term" value="F:dihydroorotate dehydrogenase (quinone) activity"/>
    <property type="evidence" value="ECO:0007669"/>
    <property type="project" value="UniProtKB-EC"/>
</dbReference>
<dbReference type="GO" id="GO:0006207">
    <property type="term" value="P:'de novo' pyrimidine nucleobase biosynthetic process"/>
    <property type="evidence" value="ECO:0007669"/>
    <property type="project" value="InterPro"/>
</dbReference>
<dbReference type="GO" id="GO:0044205">
    <property type="term" value="P:'de novo' UMP biosynthetic process"/>
    <property type="evidence" value="ECO:0007669"/>
    <property type="project" value="UniProtKB-UniRule"/>
</dbReference>
<dbReference type="CDD" id="cd04738">
    <property type="entry name" value="DHOD_2_like"/>
    <property type="match status" value="1"/>
</dbReference>
<dbReference type="Gene3D" id="3.20.20.70">
    <property type="entry name" value="Aldolase class I"/>
    <property type="match status" value="1"/>
</dbReference>
<dbReference type="HAMAP" id="MF_00225">
    <property type="entry name" value="DHO_dh_type2"/>
    <property type="match status" value="1"/>
</dbReference>
<dbReference type="InterPro" id="IPR013785">
    <property type="entry name" value="Aldolase_TIM"/>
</dbReference>
<dbReference type="InterPro" id="IPR050074">
    <property type="entry name" value="DHO_dehydrogenase"/>
</dbReference>
<dbReference type="InterPro" id="IPR012135">
    <property type="entry name" value="Dihydroorotate_DH_1_2"/>
</dbReference>
<dbReference type="InterPro" id="IPR005719">
    <property type="entry name" value="Dihydroorotate_DH_2"/>
</dbReference>
<dbReference type="InterPro" id="IPR005720">
    <property type="entry name" value="Dihydroorotate_DH_cat"/>
</dbReference>
<dbReference type="InterPro" id="IPR001295">
    <property type="entry name" value="Dihydroorotate_DH_CS"/>
</dbReference>
<dbReference type="NCBIfam" id="NF003644">
    <property type="entry name" value="PRK05286.1-1"/>
    <property type="match status" value="1"/>
</dbReference>
<dbReference type="NCBIfam" id="NF003645">
    <property type="entry name" value="PRK05286.1-2"/>
    <property type="match status" value="1"/>
</dbReference>
<dbReference type="NCBIfam" id="NF003646">
    <property type="entry name" value="PRK05286.1-4"/>
    <property type="match status" value="1"/>
</dbReference>
<dbReference type="NCBIfam" id="NF003652">
    <property type="entry name" value="PRK05286.2-5"/>
    <property type="match status" value="1"/>
</dbReference>
<dbReference type="NCBIfam" id="TIGR01036">
    <property type="entry name" value="pyrD_sub2"/>
    <property type="match status" value="1"/>
</dbReference>
<dbReference type="PANTHER" id="PTHR48109:SF4">
    <property type="entry name" value="DIHYDROOROTATE DEHYDROGENASE (QUINONE), MITOCHONDRIAL"/>
    <property type="match status" value="1"/>
</dbReference>
<dbReference type="PANTHER" id="PTHR48109">
    <property type="entry name" value="DIHYDROOROTATE DEHYDROGENASE (QUINONE), MITOCHONDRIAL-RELATED"/>
    <property type="match status" value="1"/>
</dbReference>
<dbReference type="Pfam" id="PF01180">
    <property type="entry name" value="DHO_dh"/>
    <property type="match status" value="1"/>
</dbReference>
<dbReference type="PIRSF" id="PIRSF000164">
    <property type="entry name" value="DHO_oxidase"/>
    <property type="match status" value="1"/>
</dbReference>
<dbReference type="SUPFAM" id="SSF51395">
    <property type="entry name" value="FMN-linked oxidoreductases"/>
    <property type="match status" value="1"/>
</dbReference>
<dbReference type="PROSITE" id="PS00911">
    <property type="entry name" value="DHODEHASE_1"/>
    <property type="match status" value="1"/>
</dbReference>
<dbReference type="PROSITE" id="PS00912">
    <property type="entry name" value="DHODEHASE_2"/>
    <property type="match status" value="1"/>
</dbReference>